<comment type="catalytic activity">
    <reaction>
        <text>a (2R,3S,4S)-leucoanthocyanidin + NADP(+) = a (2R,3R)-dihydroflavonol + NADPH + H(+)</text>
        <dbReference type="Rhea" id="RHEA:54444"/>
        <dbReference type="ChEBI" id="CHEBI:15378"/>
        <dbReference type="ChEBI" id="CHEBI:57783"/>
        <dbReference type="ChEBI" id="CHEBI:58349"/>
        <dbReference type="ChEBI" id="CHEBI:138176"/>
        <dbReference type="ChEBI" id="CHEBI:138188"/>
        <dbReference type="EC" id="1.1.1.219"/>
    </reaction>
</comment>
<comment type="pathway">
    <text>Secondary metabolite biosynthesis; flavonoid biosynthesis.</text>
</comment>
<comment type="similarity">
    <text evidence="2">Belongs to the NAD(P)-dependent epimerase/dehydratase family. Dihydroflavonol-4-reductase subfamily.</text>
</comment>
<dbReference type="EC" id="1.1.1.219"/>
<dbReference type="EMBL" id="BA000022">
    <property type="protein sequence ID" value="BAA17239.1"/>
    <property type="molecule type" value="Genomic_DNA"/>
</dbReference>
<dbReference type="PIR" id="S75325">
    <property type="entry name" value="S75325"/>
</dbReference>
<dbReference type="SMR" id="P73212"/>
<dbReference type="IntAct" id="P73212">
    <property type="interactions" value="1"/>
</dbReference>
<dbReference type="STRING" id="1148.gene:10498102"/>
<dbReference type="PaxDb" id="1148-1652316"/>
<dbReference type="EnsemblBacteria" id="BAA17239">
    <property type="protein sequence ID" value="BAA17239"/>
    <property type="gene ID" value="BAA17239"/>
</dbReference>
<dbReference type="KEGG" id="syn:slr1706"/>
<dbReference type="eggNOG" id="COG0451">
    <property type="taxonomic scope" value="Bacteria"/>
</dbReference>
<dbReference type="InParanoid" id="P73212"/>
<dbReference type="PhylomeDB" id="P73212"/>
<dbReference type="UniPathway" id="UPA00154"/>
<dbReference type="Proteomes" id="UP000001425">
    <property type="component" value="Chromosome"/>
</dbReference>
<dbReference type="GO" id="GO:0045552">
    <property type="term" value="F:dihydrokaempferol 4-reductase activity"/>
    <property type="evidence" value="ECO:0007669"/>
    <property type="project" value="UniProtKB-EC"/>
</dbReference>
<dbReference type="GO" id="GO:0016616">
    <property type="term" value="F:oxidoreductase activity, acting on the CH-OH group of donors, NAD or NADP as acceptor"/>
    <property type="evidence" value="ECO:0000318"/>
    <property type="project" value="GO_Central"/>
</dbReference>
<dbReference type="GO" id="GO:0009813">
    <property type="term" value="P:flavonoid biosynthetic process"/>
    <property type="evidence" value="ECO:0007669"/>
    <property type="project" value="UniProtKB-UniPathway"/>
</dbReference>
<dbReference type="CDD" id="cd05228">
    <property type="entry name" value="AR_FR_like_1_SDR_e"/>
    <property type="match status" value="1"/>
</dbReference>
<dbReference type="FunFam" id="3.40.50.720:FF:000425">
    <property type="entry name" value="NAD(P)-binding Rossmann-fold superfamily protein"/>
    <property type="match status" value="1"/>
</dbReference>
<dbReference type="Gene3D" id="3.40.50.720">
    <property type="entry name" value="NAD(P)-binding Rossmann-like Domain"/>
    <property type="match status" value="1"/>
</dbReference>
<dbReference type="InterPro" id="IPR001509">
    <property type="entry name" value="Epimerase_deHydtase"/>
</dbReference>
<dbReference type="InterPro" id="IPR017829">
    <property type="entry name" value="Hopanoid-assoc_sugar_epimerase"/>
</dbReference>
<dbReference type="InterPro" id="IPR036291">
    <property type="entry name" value="NAD(P)-bd_dom_sf"/>
</dbReference>
<dbReference type="InterPro" id="IPR051783">
    <property type="entry name" value="NAD(P)-dependent_oxidoreduct"/>
</dbReference>
<dbReference type="NCBIfam" id="TIGR03466">
    <property type="entry name" value="HpnA"/>
    <property type="match status" value="1"/>
</dbReference>
<dbReference type="PANTHER" id="PTHR48079:SF6">
    <property type="entry name" value="NAD(P)-BINDING DOMAIN-CONTAINING PROTEIN-RELATED"/>
    <property type="match status" value="1"/>
</dbReference>
<dbReference type="PANTHER" id="PTHR48079">
    <property type="entry name" value="PROTEIN YEEZ"/>
    <property type="match status" value="1"/>
</dbReference>
<dbReference type="Pfam" id="PF01370">
    <property type="entry name" value="Epimerase"/>
    <property type="match status" value="1"/>
</dbReference>
<dbReference type="SUPFAM" id="SSF51735">
    <property type="entry name" value="NAD(P)-binding Rossmann-fold domains"/>
    <property type="match status" value="1"/>
</dbReference>
<gene>
    <name type="primary">dfrA</name>
    <name type="ordered locus">slr1706</name>
</gene>
<organism>
    <name type="scientific">Synechocystis sp. (strain ATCC 27184 / PCC 6803 / Kazusa)</name>
    <dbReference type="NCBI Taxonomy" id="1111708"/>
    <lineage>
        <taxon>Bacteria</taxon>
        <taxon>Bacillati</taxon>
        <taxon>Cyanobacteriota</taxon>
        <taxon>Cyanophyceae</taxon>
        <taxon>Synechococcales</taxon>
        <taxon>Merismopediaceae</taxon>
        <taxon>Synechocystis</taxon>
    </lineage>
</organism>
<protein>
    <recommendedName>
        <fullName>Putative dihydroflavonol 4-reductase</fullName>
        <shortName>DFR</shortName>
        <ecNumber>1.1.1.219</ecNumber>
    </recommendedName>
    <alternativeName>
        <fullName>Dihydrokaempferol 4-reductase</fullName>
    </alternativeName>
</protein>
<feature type="chain" id="PRO_0000215573" description="Putative dihydroflavonol 4-reductase">
    <location>
        <begin position="1"/>
        <end position="343"/>
    </location>
</feature>
<feature type="binding site" evidence="1">
    <location>
        <position position="150"/>
    </location>
    <ligand>
        <name>NADP(+)</name>
        <dbReference type="ChEBI" id="CHEBI:58349"/>
    </ligand>
</feature>
<sequence length="343" mass="37864">MEVNHWIAMADCFFVTGGTGFVGANLVRHLLEQGYQVRALVRASSRPDNLQNLPIDWVVGDLNDGDLHQQMQGCQGLFHVAAHYSLWQKDREALYRSNVLGTRNILACAQKAGIERTVYTSSVAAIGVKGDGQRADESYQSPVEKLIGAYKQSKYWAEQEALTAAQQGQDIVIVNPSTPIGPWDIKPTPTGEIILRFLRRQMPAYVNTGLNLIDVRDVAAGHLLAWQRGKTALTRGDRYILGHENISLQGILAHLSTITGLPAPKNTVPLWLPLTFAWVEEKVLAPLGRSPSVPMDGVKMSAQEMYYDASKAVQELGLPQSSIKQALADAVHWFQNHGYVKTQ</sequence>
<name>DFRA_SYNY3</name>
<proteinExistence type="inferred from homology"/>
<evidence type="ECO:0000250" key="1">
    <source>
        <dbReference type="UniProtKB" id="A0A059TC02"/>
    </source>
</evidence>
<evidence type="ECO:0000305" key="2"/>
<reference key="1">
    <citation type="journal article" date="1996" name="DNA Res.">
        <title>Sequence analysis of the genome of the unicellular cyanobacterium Synechocystis sp. strain PCC6803. II. Sequence determination of the entire genome and assignment of potential protein-coding regions.</title>
        <authorList>
            <person name="Kaneko T."/>
            <person name="Sato S."/>
            <person name="Kotani H."/>
            <person name="Tanaka A."/>
            <person name="Asamizu E."/>
            <person name="Nakamura Y."/>
            <person name="Miyajima N."/>
            <person name="Hirosawa M."/>
            <person name="Sugiura M."/>
            <person name="Sasamoto S."/>
            <person name="Kimura T."/>
            <person name="Hosouchi T."/>
            <person name="Matsuno A."/>
            <person name="Muraki A."/>
            <person name="Nakazaki N."/>
            <person name="Naruo K."/>
            <person name="Okumura S."/>
            <person name="Shimpo S."/>
            <person name="Takeuchi C."/>
            <person name="Wada T."/>
            <person name="Watanabe A."/>
            <person name="Yamada M."/>
            <person name="Yasuda M."/>
            <person name="Tabata S."/>
        </authorList>
    </citation>
    <scope>NUCLEOTIDE SEQUENCE [LARGE SCALE GENOMIC DNA]</scope>
    <source>
        <strain>ATCC 27184 / PCC 6803 / Kazusa</strain>
    </source>
</reference>
<accession>P73212</accession>
<keyword id="KW-0284">Flavonoid biosynthesis</keyword>
<keyword id="KW-0521">NADP</keyword>
<keyword id="KW-0560">Oxidoreductase</keyword>
<keyword id="KW-1185">Reference proteome</keyword>